<comment type="function">
    <text evidence="1">NDH-1 shuttles electrons from NADH, via FMN and iron-sulfur (Fe-S) centers, to quinones in the respiratory chain. The immediate electron acceptor for the enzyme in this species is believed to be ubiquinone. Couples the redox reaction to proton translocation (for every two electrons transferred, four hydrogen ions are translocated across the cytoplasmic membrane), and thus conserves the redox energy in a proton gradient.</text>
</comment>
<comment type="catalytic activity">
    <reaction evidence="1">
        <text>a quinone + NADH + 5 H(+)(in) = a quinol + NAD(+) + 4 H(+)(out)</text>
        <dbReference type="Rhea" id="RHEA:57888"/>
        <dbReference type="ChEBI" id="CHEBI:15378"/>
        <dbReference type="ChEBI" id="CHEBI:24646"/>
        <dbReference type="ChEBI" id="CHEBI:57540"/>
        <dbReference type="ChEBI" id="CHEBI:57945"/>
        <dbReference type="ChEBI" id="CHEBI:132124"/>
    </reaction>
</comment>
<comment type="subunit">
    <text evidence="1">NDH-1 is composed of 13 different subunits. Subunits NuoA, H, J, K, L, M, N constitute the membrane sector of the complex.</text>
</comment>
<comment type="subcellular location">
    <subcellularLocation>
        <location evidence="1">Cell inner membrane</location>
        <topology evidence="1">Multi-pass membrane protein</topology>
    </subcellularLocation>
</comment>
<comment type="similarity">
    <text evidence="1">Belongs to the complex I subunit 3 family.</text>
</comment>
<evidence type="ECO:0000255" key="1">
    <source>
        <dbReference type="HAMAP-Rule" id="MF_01394"/>
    </source>
</evidence>
<name>NUOA_SHIFL</name>
<proteinExistence type="inferred from homology"/>
<accession>P0AFC6</accession>
<accession>P33597</accession>
<accession>P77159</accession>
<organism>
    <name type="scientific">Shigella flexneri</name>
    <dbReference type="NCBI Taxonomy" id="623"/>
    <lineage>
        <taxon>Bacteria</taxon>
        <taxon>Pseudomonadati</taxon>
        <taxon>Pseudomonadota</taxon>
        <taxon>Gammaproteobacteria</taxon>
        <taxon>Enterobacterales</taxon>
        <taxon>Enterobacteriaceae</taxon>
        <taxon>Shigella</taxon>
    </lineage>
</organism>
<dbReference type="EC" id="7.1.1.-" evidence="1"/>
<dbReference type="EMBL" id="AE005674">
    <property type="protein sequence ID" value="AAN43877.1"/>
    <property type="molecule type" value="Genomic_DNA"/>
</dbReference>
<dbReference type="EMBL" id="AE014073">
    <property type="protein sequence ID" value="AAP17695.1"/>
    <property type="molecule type" value="Genomic_DNA"/>
</dbReference>
<dbReference type="RefSeq" id="NP_708170.1">
    <property type="nucleotide sequence ID" value="NC_004337.2"/>
</dbReference>
<dbReference type="RefSeq" id="WP_000062997.1">
    <property type="nucleotide sequence ID" value="NZ_WPGW01000084.1"/>
</dbReference>
<dbReference type="SMR" id="P0AFC6"/>
<dbReference type="STRING" id="198214.SF2364"/>
<dbReference type="PaxDb" id="198214-SF2364"/>
<dbReference type="GeneID" id="1025504"/>
<dbReference type="GeneID" id="93774886"/>
<dbReference type="KEGG" id="sfl:SF2364"/>
<dbReference type="KEGG" id="sfx:S2499"/>
<dbReference type="PATRIC" id="fig|198214.7.peg.2830"/>
<dbReference type="HOGENOM" id="CLU_119549_2_0_6"/>
<dbReference type="Proteomes" id="UP000001006">
    <property type="component" value="Chromosome"/>
</dbReference>
<dbReference type="Proteomes" id="UP000002673">
    <property type="component" value="Chromosome"/>
</dbReference>
<dbReference type="GO" id="GO:0030964">
    <property type="term" value="C:NADH dehydrogenase complex"/>
    <property type="evidence" value="ECO:0007669"/>
    <property type="project" value="TreeGrafter"/>
</dbReference>
<dbReference type="GO" id="GO:0005886">
    <property type="term" value="C:plasma membrane"/>
    <property type="evidence" value="ECO:0007669"/>
    <property type="project" value="UniProtKB-SubCell"/>
</dbReference>
<dbReference type="GO" id="GO:0008137">
    <property type="term" value="F:NADH dehydrogenase (ubiquinone) activity"/>
    <property type="evidence" value="ECO:0007669"/>
    <property type="project" value="InterPro"/>
</dbReference>
<dbReference type="GO" id="GO:0050136">
    <property type="term" value="F:NADH:ubiquinone reductase (non-electrogenic) activity"/>
    <property type="evidence" value="ECO:0007669"/>
    <property type="project" value="UniProtKB-UniRule"/>
</dbReference>
<dbReference type="GO" id="GO:0048038">
    <property type="term" value="F:quinone binding"/>
    <property type="evidence" value="ECO:0007669"/>
    <property type="project" value="UniProtKB-KW"/>
</dbReference>
<dbReference type="FunFam" id="1.20.58.1610:FF:000003">
    <property type="entry name" value="NADH-quinone oxidoreductase subunit A"/>
    <property type="match status" value="1"/>
</dbReference>
<dbReference type="Gene3D" id="1.20.58.1610">
    <property type="entry name" value="NADH:ubiquinone/plastoquinone oxidoreductase, chain 3"/>
    <property type="match status" value="1"/>
</dbReference>
<dbReference type="HAMAP" id="MF_01394">
    <property type="entry name" value="NDH1_NuoA"/>
    <property type="match status" value="1"/>
</dbReference>
<dbReference type="InterPro" id="IPR023043">
    <property type="entry name" value="NAD(P)H_OxRDtase_bac/plastid"/>
</dbReference>
<dbReference type="InterPro" id="IPR000440">
    <property type="entry name" value="NADH_UbQ/plastoQ_OxRdtase_su3"/>
</dbReference>
<dbReference type="InterPro" id="IPR038430">
    <property type="entry name" value="NDAH_ubi_oxred_su3_sf"/>
</dbReference>
<dbReference type="PANTHER" id="PTHR11058:SF21">
    <property type="entry name" value="NADH-QUINONE OXIDOREDUCTASE SUBUNIT A"/>
    <property type="match status" value="1"/>
</dbReference>
<dbReference type="PANTHER" id="PTHR11058">
    <property type="entry name" value="NADH-UBIQUINONE OXIDOREDUCTASE CHAIN 3"/>
    <property type="match status" value="1"/>
</dbReference>
<dbReference type="Pfam" id="PF00507">
    <property type="entry name" value="Oxidored_q4"/>
    <property type="match status" value="1"/>
</dbReference>
<feature type="chain" id="PRO_0000117865" description="NADH-quinone oxidoreductase subunit A">
    <location>
        <begin position="1"/>
        <end position="147"/>
    </location>
</feature>
<feature type="transmembrane region" description="Helical" evidence="1">
    <location>
        <begin position="16"/>
        <end position="36"/>
    </location>
</feature>
<feature type="transmembrane region" description="Helical" evidence="1">
    <location>
        <begin position="68"/>
        <end position="88"/>
    </location>
</feature>
<feature type="transmembrane region" description="Helical" evidence="1">
    <location>
        <begin position="98"/>
        <end position="118"/>
    </location>
</feature>
<protein>
    <recommendedName>
        <fullName evidence="1">NADH-quinone oxidoreductase subunit A</fullName>
        <ecNumber evidence="1">7.1.1.-</ecNumber>
    </recommendedName>
    <alternativeName>
        <fullName evidence="1">NADH dehydrogenase I subunit A</fullName>
    </alternativeName>
    <alternativeName>
        <fullName evidence="1">NDH-1 subunit A</fullName>
    </alternativeName>
    <alternativeName>
        <fullName evidence="1">NUO1</fullName>
    </alternativeName>
</protein>
<keyword id="KW-0997">Cell inner membrane</keyword>
<keyword id="KW-1003">Cell membrane</keyword>
<keyword id="KW-0472">Membrane</keyword>
<keyword id="KW-0520">NAD</keyword>
<keyword id="KW-0874">Quinone</keyword>
<keyword id="KW-1185">Reference proteome</keyword>
<keyword id="KW-1278">Translocase</keyword>
<keyword id="KW-0812">Transmembrane</keyword>
<keyword id="KW-1133">Transmembrane helix</keyword>
<keyword id="KW-0813">Transport</keyword>
<keyword id="KW-0830">Ubiquinone</keyword>
<reference key="1">
    <citation type="journal article" date="2002" name="Nucleic Acids Res.">
        <title>Genome sequence of Shigella flexneri 2a: insights into pathogenicity through comparison with genomes of Escherichia coli K12 and O157.</title>
        <authorList>
            <person name="Jin Q."/>
            <person name="Yuan Z."/>
            <person name="Xu J."/>
            <person name="Wang Y."/>
            <person name="Shen Y."/>
            <person name="Lu W."/>
            <person name="Wang J."/>
            <person name="Liu H."/>
            <person name="Yang J."/>
            <person name="Yang F."/>
            <person name="Zhang X."/>
            <person name="Zhang J."/>
            <person name="Yang G."/>
            <person name="Wu H."/>
            <person name="Qu D."/>
            <person name="Dong J."/>
            <person name="Sun L."/>
            <person name="Xue Y."/>
            <person name="Zhao A."/>
            <person name="Gao Y."/>
            <person name="Zhu J."/>
            <person name="Kan B."/>
            <person name="Ding K."/>
            <person name="Chen S."/>
            <person name="Cheng H."/>
            <person name="Yao Z."/>
            <person name="He B."/>
            <person name="Chen R."/>
            <person name="Ma D."/>
            <person name="Qiang B."/>
            <person name="Wen Y."/>
            <person name="Hou Y."/>
            <person name="Yu J."/>
        </authorList>
    </citation>
    <scope>NUCLEOTIDE SEQUENCE [LARGE SCALE GENOMIC DNA]</scope>
    <source>
        <strain>301 / Serotype 2a</strain>
    </source>
</reference>
<reference key="2">
    <citation type="journal article" date="2003" name="Infect. Immun.">
        <title>Complete genome sequence and comparative genomics of Shigella flexneri serotype 2a strain 2457T.</title>
        <authorList>
            <person name="Wei J."/>
            <person name="Goldberg M.B."/>
            <person name="Burland V."/>
            <person name="Venkatesan M.M."/>
            <person name="Deng W."/>
            <person name="Fournier G."/>
            <person name="Mayhew G.F."/>
            <person name="Plunkett G. III"/>
            <person name="Rose D.J."/>
            <person name="Darling A."/>
            <person name="Mau B."/>
            <person name="Perna N.T."/>
            <person name="Payne S.M."/>
            <person name="Runyen-Janecky L.J."/>
            <person name="Zhou S."/>
            <person name="Schwartz D.C."/>
            <person name="Blattner F.R."/>
        </authorList>
    </citation>
    <scope>NUCLEOTIDE SEQUENCE [LARGE SCALE GENOMIC DNA]</scope>
    <source>
        <strain>ATCC 700930 / 2457T / Serotype 2a</strain>
    </source>
</reference>
<gene>
    <name evidence="1" type="primary">nuoA</name>
    <name type="ordered locus">SF2364</name>
    <name type="ordered locus">S2499</name>
</gene>
<sequence length="147" mass="16457">MSMSTSTEVIAHHWAFAIFLIVAIGLCCLMLVGGWFLGGRARARSKNVPFESGIDSVGSARLRLSAKFYLVAMFFVIFDVEALYLFAWSTSIRESGWVGFVEAAIFIFVLLAGLVYLVRIGALDWTPARSRRERMNPETNSIANRQR</sequence>